<comment type="function">
    <text evidence="5">Aerial growth, conidiation, and dispersal of filamentous fungi in the environment rely upon a capability of their secreting small amphipathic proteins called hydrophobins (HPBs) with low sequence identity. Class I can self-assemble into an outermost layer of rodlet bundles on aerial cell surfaces, conferring cellular hydrophobicity that supports fungal growth, development and dispersal; whereas Class II form highly ordered films at water-air interfaces through intermolecular interactions but contribute nothing to the rodlet structure.</text>
</comment>
<comment type="subunit">
    <text evidence="1">Self-assembles to form functional amyloid fibrils called rodlets. Self-assembly into fibrillar rodlets occurs spontaneously at hydrophobic:hydrophilic interfaces and the rodlets further associate laterally to form amphipathic monolayers.</text>
</comment>
<comment type="subcellular location">
    <subcellularLocation>
        <location evidence="6">Secreted</location>
    </subcellularLocation>
    <subcellularLocation>
        <location evidence="6">Secreted</location>
        <location evidence="6">Cell wall</location>
    </subcellularLocation>
</comment>
<comment type="developmental stage">
    <text evidence="3">Expressed in primordia.</text>
</comment>
<comment type="similarity">
    <text evidence="5">Belongs to the fungal hydrophobin family.</text>
</comment>
<organism>
    <name type="scientific">Pleurotus ostreatus (strain PC15)</name>
    <name type="common">Oyster mushroom</name>
    <dbReference type="NCBI Taxonomy" id="1137138"/>
    <lineage>
        <taxon>Eukaryota</taxon>
        <taxon>Fungi</taxon>
        <taxon>Dikarya</taxon>
        <taxon>Basidiomycota</taxon>
        <taxon>Agaricomycotina</taxon>
        <taxon>Agaricomycetes</taxon>
        <taxon>Agaricomycetidae</taxon>
        <taxon>Agaricales</taxon>
        <taxon>Pleurotineae</taxon>
        <taxon>Pleurotaceae</taxon>
        <taxon>Pleurotus</taxon>
    </lineage>
</organism>
<gene>
    <name evidence="4" type="primary">Hydph13</name>
    <name type="ORF">PLEOSDRAFT_1026039</name>
</gene>
<reference key="1">
    <citation type="journal article" date="2014" name="Proc. Natl. Acad. Sci. U.S.A.">
        <title>Extensive sampling of basidiomycete genomes demonstrates inadequacy of the white-rot/brown-rot paradigm for wood decay fungi.</title>
        <authorList>
            <person name="Riley R."/>
            <person name="Salamov A.A."/>
            <person name="Brown D.W."/>
            <person name="Nagy L.G."/>
            <person name="Floudas D."/>
            <person name="Held B.W."/>
            <person name="Levasseur A."/>
            <person name="Lombard V."/>
            <person name="Morin E."/>
            <person name="Otillar R."/>
            <person name="Lindquist E.A."/>
            <person name="Sun H."/>
            <person name="LaButti K.M."/>
            <person name="Schmutz J."/>
            <person name="Jabbour D."/>
            <person name="Luo H."/>
            <person name="Baker S.E."/>
            <person name="Pisabarro A.G."/>
            <person name="Walton J.D."/>
            <person name="Blanchette R.A."/>
            <person name="Henrissat B."/>
            <person name="Martin F."/>
            <person name="Cullen D."/>
            <person name="Hibbett D.S."/>
            <person name="Grigoriev I.V."/>
        </authorList>
    </citation>
    <scope>NUCLEOTIDE SEQUENCE [LARGE SCALE GENOMIC DNA]</scope>
    <source>
        <strain>PC15</strain>
    </source>
</reference>
<reference key="2">
    <citation type="journal article" date="2021" name="Microbiol. Res.">
        <title>Identification of hydrophobin genes and their physiological functions related to growth and development in Pleurotus ostreatus.</title>
        <authorList>
            <person name="Xu D."/>
            <person name="Wang Y."/>
            <person name="Keerio A.A."/>
            <person name="Ma A."/>
        </authorList>
    </citation>
    <scope>IDENTIFICATION</scope>
    <scope>DEVELOPMENTAL STAGE</scope>
</reference>
<evidence type="ECO:0000250" key="1">
    <source>
        <dbReference type="UniProtKB" id="Q04571"/>
    </source>
</evidence>
<evidence type="ECO:0000255" key="2">
    <source>
        <dbReference type="PROSITE-ProRule" id="PRU00498"/>
    </source>
</evidence>
<evidence type="ECO:0000269" key="3">
    <source>
    </source>
</evidence>
<evidence type="ECO:0000303" key="4">
    <source>
    </source>
</evidence>
<evidence type="ECO:0000305" key="5"/>
<evidence type="ECO:0000305" key="6">
    <source>
    </source>
</evidence>
<evidence type="ECO:0000312" key="7">
    <source>
        <dbReference type="EMBL" id="KDQ34065.1"/>
    </source>
</evidence>
<keyword id="KW-0134">Cell wall</keyword>
<keyword id="KW-1015">Disulfide bond</keyword>
<keyword id="KW-0325">Glycoprotein</keyword>
<keyword id="KW-1185">Reference proteome</keyword>
<keyword id="KW-0964">Secreted</keyword>
<name>HYD13_PLEO1</name>
<protein>
    <recommendedName>
        <fullName evidence="4">Class I hydrophobin 13</fullName>
    </recommendedName>
</protein>
<sequence length="95" mass="9214">PTKMTRRTEPASSCSTGSLDCCNSSGDATDTSITTLLAGIGLPIGSVTGLVGVTCSPITGIGLGGSGCSSEALCCSNNSFKGLVALGCVPVDLSL</sequence>
<accession>A0A067P494</accession>
<feature type="chain" id="PRO_0000462410" description="Class I hydrophobin 13">
    <location>
        <begin position="1" status="less than"/>
        <end position="95" status="greater than"/>
    </location>
</feature>
<feature type="glycosylation site" description="N-linked (GlcNAc...) asparagine" evidence="2">
    <location>
        <position position="23"/>
    </location>
</feature>
<feature type="glycosylation site" description="N-linked (GlcNAc...) asparagine" evidence="2">
    <location>
        <position position="77"/>
    </location>
</feature>
<feature type="disulfide bond" evidence="1">
    <location>
        <begin position="14"/>
        <end position="74"/>
    </location>
</feature>
<feature type="disulfide bond" evidence="1">
    <location>
        <begin position="21"/>
        <end position="68"/>
    </location>
</feature>
<feature type="disulfide bond" evidence="1">
    <location>
        <begin position="22"/>
        <end position="55"/>
    </location>
</feature>
<feature type="disulfide bond" evidence="1">
    <location>
        <begin position="75"/>
        <end position="88"/>
    </location>
</feature>
<feature type="non-terminal residue" evidence="7">
    <location>
        <position position="1"/>
    </location>
</feature>
<feature type="non-terminal residue" evidence="7">
    <location>
        <position position="95"/>
    </location>
</feature>
<dbReference type="EMBL" id="KL198004">
    <property type="protein sequence ID" value="KDQ34065.1"/>
    <property type="molecule type" value="Genomic_DNA"/>
</dbReference>
<dbReference type="VEuPathDB" id="FungiDB:PLEOSDRAFT_1026039"/>
<dbReference type="HOGENOM" id="CLU_105134_2_0_1"/>
<dbReference type="InParanoid" id="A0A067P494"/>
<dbReference type="OrthoDB" id="138913at5338"/>
<dbReference type="Proteomes" id="UP000027073">
    <property type="component" value="Unassembled WGS sequence"/>
</dbReference>
<dbReference type="GO" id="GO:0005576">
    <property type="term" value="C:extracellular region"/>
    <property type="evidence" value="ECO:0007669"/>
    <property type="project" value="UniProtKB-KW"/>
</dbReference>
<dbReference type="GO" id="GO:0009277">
    <property type="term" value="C:fungal-type cell wall"/>
    <property type="evidence" value="ECO:0007669"/>
    <property type="project" value="InterPro"/>
</dbReference>
<dbReference type="GO" id="GO:0005199">
    <property type="term" value="F:structural constituent of cell wall"/>
    <property type="evidence" value="ECO:0007669"/>
    <property type="project" value="InterPro"/>
</dbReference>
<dbReference type="CDD" id="cd23507">
    <property type="entry name" value="hydrophobin_I"/>
    <property type="match status" value="1"/>
</dbReference>
<dbReference type="InterPro" id="IPR001338">
    <property type="entry name" value="Hydrophobin"/>
</dbReference>
<dbReference type="Pfam" id="PF01185">
    <property type="entry name" value="Hydrophobin"/>
    <property type="match status" value="1"/>
</dbReference>
<dbReference type="SMART" id="SM00075">
    <property type="entry name" value="HYDRO"/>
    <property type="match status" value="1"/>
</dbReference>
<proteinExistence type="evidence at transcript level"/>